<sequence length="69" mass="7726">VLIIAVLFLTACQLTTAETSSRGKQKHRALRSTDKNSRMSKRCTPPGGYCYHPDPCCSQVCNFPRKHCL</sequence>
<evidence type="ECO:0000250" key="1"/>
<evidence type="ECO:0000255" key="2"/>
<evidence type="ECO:0000256" key="3">
    <source>
        <dbReference type="SAM" id="MobiDB-lite"/>
    </source>
</evidence>
<evidence type="ECO:0000305" key="4"/>
<comment type="subcellular location">
    <subcellularLocation>
        <location evidence="1">Secreted</location>
    </subcellularLocation>
</comment>
<comment type="tissue specificity">
    <text>Expressed by the venom duct.</text>
</comment>
<comment type="domain">
    <text evidence="1">The presence of a 'disulfide through disulfide knot' structurally defines this protein as a knottin.</text>
</comment>
<comment type="domain">
    <text>The cysteine framework is VI/VII (C-C-CC-C-C).</text>
</comment>
<comment type="similarity">
    <text evidence="4">Belongs to the conotoxin O1 superfamily.</text>
</comment>
<keyword id="KW-0165">Cleavage on pair of basic residues</keyword>
<keyword id="KW-1015">Disulfide bond</keyword>
<keyword id="KW-0960">Knottin</keyword>
<keyword id="KW-0964">Secreted</keyword>
<keyword id="KW-0732">Signal</keyword>
<keyword id="KW-0800">Toxin</keyword>
<reference key="1">
    <citation type="journal article" date="1999" name="Proc. Natl. Acad. Sci. U.S.A.">
        <title>Molecular genetics of ecological diversification: duplication and rapid evolution of toxin genes of the venomous gastropod Conus.</title>
        <authorList>
            <person name="Duda T.F. Jr."/>
            <person name="Palumbi S.R."/>
        </authorList>
    </citation>
    <scope>NUCLEOTIDE SEQUENCE [MRNA]</scope>
    <source>
        <tissue>Venom duct</tissue>
    </source>
</reference>
<reference key="2">
    <citation type="journal article" date="2004" name="Proc. R. Soc. B">
        <title>Gene expression and feeding ecology: evolution of piscivory in the venomous gastropod genus Conus.</title>
        <authorList>
            <person name="Duda T.F. Jr."/>
            <person name="Palumbi S.R."/>
        </authorList>
    </citation>
    <scope>NUCLEOTIDE SEQUENCE [MRNA]</scope>
    <source>
        <tissue>Venom duct</tissue>
    </source>
</reference>
<name>O16F_CONAB</name>
<accession>Q9TVK3</accession>
<accession>Q9TVK4</accession>
<accession>Q9UA92</accession>
<dbReference type="EMBL" id="AF089986">
    <property type="protein sequence ID" value="AAD48241.1"/>
    <property type="molecule type" value="mRNA"/>
</dbReference>
<dbReference type="EMBL" id="AF089987">
    <property type="protein sequence ID" value="AAD48242.1"/>
    <property type="molecule type" value="mRNA"/>
</dbReference>
<dbReference type="EMBL" id="AF089988">
    <property type="protein sequence ID" value="AAD48243.1"/>
    <property type="molecule type" value="mRNA"/>
</dbReference>
<dbReference type="EMBL" id="AF089989">
    <property type="protein sequence ID" value="AAD48244.1"/>
    <property type="molecule type" value="mRNA"/>
</dbReference>
<dbReference type="EMBL" id="AF089990">
    <property type="protein sequence ID" value="AAD48245.1"/>
    <property type="molecule type" value="mRNA"/>
</dbReference>
<dbReference type="EMBL" id="AF089991">
    <property type="protein sequence ID" value="AAD48246.1"/>
    <property type="molecule type" value="mRNA"/>
</dbReference>
<dbReference type="EMBL" id="AF089992">
    <property type="protein sequence ID" value="AAD48247.1"/>
    <property type="molecule type" value="mRNA"/>
</dbReference>
<dbReference type="EMBL" id="AF089993">
    <property type="protein sequence ID" value="AAD48248.1"/>
    <property type="molecule type" value="mRNA"/>
</dbReference>
<dbReference type="SMR" id="Q9TVK3"/>
<dbReference type="ConoServer" id="968">
    <property type="toxin name" value="ABVIF mutant 1 precursor"/>
</dbReference>
<dbReference type="ConoServer" id="963">
    <property type="toxin name" value="ABVIF precursor"/>
</dbReference>
<dbReference type="ConoServer" id="964">
    <property type="toxin name" value="ABVIF precursor"/>
</dbReference>
<dbReference type="GO" id="GO:0005576">
    <property type="term" value="C:extracellular region"/>
    <property type="evidence" value="ECO:0007669"/>
    <property type="project" value="UniProtKB-SubCell"/>
</dbReference>
<dbReference type="GO" id="GO:0008200">
    <property type="term" value="F:ion channel inhibitor activity"/>
    <property type="evidence" value="ECO:0007669"/>
    <property type="project" value="InterPro"/>
</dbReference>
<dbReference type="GO" id="GO:0090729">
    <property type="term" value="F:toxin activity"/>
    <property type="evidence" value="ECO:0007669"/>
    <property type="project" value="UniProtKB-KW"/>
</dbReference>
<dbReference type="InterPro" id="IPR004214">
    <property type="entry name" value="Conotoxin"/>
</dbReference>
<dbReference type="Pfam" id="PF02950">
    <property type="entry name" value="Conotoxin"/>
    <property type="match status" value="1"/>
</dbReference>
<proteinExistence type="evidence at transcript level"/>
<protein>
    <recommendedName>
        <fullName>Conotoxin AbVIF</fullName>
    </recommendedName>
</protein>
<feature type="signal peptide" evidence="2">
    <location>
        <begin position="1" status="less than"/>
        <end position="17"/>
    </location>
</feature>
<feature type="propeptide" id="PRO_0000392120" evidence="1">
    <location>
        <begin position="18"/>
        <end position="40"/>
    </location>
</feature>
<feature type="peptide" id="PRO_0000392121" description="Conotoxin AbVIF">
    <location>
        <begin position="43"/>
        <end position="69"/>
    </location>
</feature>
<feature type="region of interest" description="Disordered" evidence="3">
    <location>
        <begin position="20"/>
        <end position="41"/>
    </location>
</feature>
<feature type="disulfide bond" evidence="1">
    <location>
        <begin position="43"/>
        <end position="57"/>
    </location>
</feature>
<feature type="disulfide bond" evidence="1">
    <location>
        <begin position="50"/>
        <end position="61"/>
    </location>
</feature>
<feature type="disulfide bond" evidence="1">
    <location>
        <begin position="56"/>
        <end position="68"/>
    </location>
</feature>
<feature type="sequence conflict" description="In Ref. 1 and 2; AAD48241." evidence="4" ref="1 2">
    <original>K</original>
    <variation>E</variation>
    <location>
        <position position="24"/>
    </location>
</feature>
<feature type="sequence conflict" description="In Ref. 1 and 2; AAD48241." evidence="4" ref="1 2">
    <original>R</original>
    <variation>L</variation>
    <location>
        <position position="28"/>
    </location>
</feature>
<feature type="sequence conflict" description="In Ref. 1 and 2; AAD48248/AAD48247/AAD48246." evidence="4" ref="1 2">
    <original>V</original>
    <variation>Y</variation>
    <location>
        <position position="60"/>
    </location>
</feature>
<feature type="non-terminal residue">
    <location>
        <position position="1"/>
    </location>
</feature>
<organism>
    <name type="scientific">Conus abbreviatus</name>
    <name type="common">Abbreviated cone</name>
    <name type="synonym">Miliariconus abbreviatus</name>
    <dbReference type="NCBI Taxonomy" id="100123"/>
    <lineage>
        <taxon>Eukaryota</taxon>
        <taxon>Metazoa</taxon>
        <taxon>Spiralia</taxon>
        <taxon>Lophotrochozoa</taxon>
        <taxon>Mollusca</taxon>
        <taxon>Gastropoda</taxon>
        <taxon>Caenogastropoda</taxon>
        <taxon>Neogastropoda</taxon>
        <taxon>Conoidea</taxon>
        <taxon>Conidae</taxon>
        <taxon>Conus</taxon>
        <taxon>Virroconus</taxon>
    </lineage>
</organism>